<accession>Q641Y8</accession>
<sequence>MAAFSEMGVMPEIAQAVEEMDWLLPTDIQAESIPLILGGGDVLMAAETGSGKTGAFSIPVIQIVYETLKDQQEGKKGKATIKTGASVLNKWQMNPYDRGSAFAIGSDGLCCQSREVKEWHGCRATRGLLRGKHYYEVSCHDQGLCRVGWSTMQASLDLGTDKFGFGFGGTGKKSHNKQFDNYGEEFTMHDTIGCYLDIDKGHVKFSKNGKDLGLAFEIPAHIKNQALFPACVLKNAELKFNFGEEEFKFPPKDGFVALSKAPDSYVVKSQHTGNAQVSQTKFLPNAPKALIVEPSRELAEQTLNNVKQFKKYIDNPKLRELLIIGGVAARDQLSVLDNGVDIVVGTPGRLDDLVSTGKLNLSQVRFLVLDEADGLLSQGYSDFINRMHNQIPQITSDGKRLQVIVCSATLHSFDVKKLSEKIMHFPTWVDLKGEDSVPDTVHHVVVPVNPKTDRLWERLGKNHIRTDDVHAKDNTRPGANSPEMWSEAIKILKGEYAVRAIKEHKMDQAIIFCRTKIDCDNLEQYFMQQGGGPDKKGHQFSCVCLHGDRKPHERKQNLERFKKGDVRFLICTDVAARGIDIHGVPYVINVTLPDEKQNYVHRIGRVGRAERMGLAISLVATEKEKVWYHVCSNRGKGCYNTRLKEDGGCTIWYNEMQLLSEIEEHLNCTISQVEPDIKVPVDEFDGKVTYGQKRAAGGGNYKGHVDILAPTVQELAALEKEAQTSFLHLGYLPNQLFRTF</sequence>
<gene>
    <name type="primary">Ddx1</name>
</gene>
<keyword id="KW-0007">Acetylation</keyword>
<keyword id="KW-0010">Activator</keyword>
<keyword id="KW-0051">Antiviral defense</keyword>
<keyword id="KW-0067">ATP-binding</keyword>
<keyword id="KW-0963">Cytoplasm</keyword>
<keyword id="KW-0238">DNA-binding</keyword>
<keyword id="KW-0269">Exonuclease</keyword>
<keyword id="KW-0347">Helicase</keyword>
<keyword id="KW-0378">Hydrolase</keyword>
<keyword id="KW-0391">Immunity</keyword>
<keyword id="KW-0399">Innate immunity</keyword>
<keyword id="KW-1017">Isopeptide bond</keyword>
<keyword id="KW-0496">Mitochondrion</keyword>
<keyword id="KW-0507">mRNA processing</keyword>
<keyword id="KW-0540">Nuclease</keyword>
<keyword id="KW-0547">Nucleotide-binding</keyword>
<keyword id="KW-0539">Nucleus</keyword>
<keyword id="KW-0597">Phosphoprotein</keyword>
<keyword id="KW-1185">Reference proteome</keyword>
<keyword id="KW-0694">RNA-binding</keyword>
<keyword id="KW-0804">Transcription</keyword>
<keyword id="KW-0805">Transcription regulation</keyword>
<keyword id="KW-0819">tRNA processing</keyword>
<keyword id="KW-0832">Ubl conjugation</keyword>
<comment type="function">
    <text evidence="1 2">Acts as an ATP-dependent RNA helicase, able to unwind both RNA-RNA and RNA-DNA duplexes. Possesses 5' single-stranded RNA overhang nuclease activity. Possesses ATPase activity on various RNA, but not DNA polynucleotides. May play a role in RNA clearance at DNA double-strand breaks (DSBs), thereby facilitating the template-guided repair of transcriptionally active regions of the genome. Together with RELA, acts as a coactivator to enhance NF-kappa-B-mediated transcriptional activation. Acts as a positive transcriptional regulator of cyclin CCND2 expression. Binds to the cyclin CCND2 promoter region. Associates with chromatin at the NF-kappa-B promoter region via association with RELA. Binds to poly(A) RNA. May be involved in 3'-end cleavage and polyadenylation of pre-mRNAs. Component of the tRNA-splicing ligase complex required to facilitate the enzymatic turnover of catalytic subunit RTCB: together with archease (ZBTB8OS), acts by facilitating the guanylylation of RTCB, a key intermediate step in tRNA ligation. Component of a multi-helicase-TICAM1 complex that acts as a cytoplasmic sensor of viral double-stranded RNA (dsRNA) and plays a role in the activation of a cascade of antiviral responses including the induction of pro-inflammatory cytokines via the adapter molecule TICAM1. Specifically binds (via helicase ATP-binding domain) on both short and long poly(I:C) dsRNA (By similarity).</text>
</comment>
<comment type="catalytic activity">
    <reaction>
        <text>ATP + H2O = ADP + phosphate + H(+)</text>
        <dbReference type="Rhea" id="RHEA:13065"/>
        <dbReference type="ChEBI" id="CHEBI:15377"/>
        <dbReference type="ChEBI" id="CHEBI:15378"/>
        <dbReference type="ChEBI" id="CHEBI:30616"/>
        <dbReference type="ChEBI" id="CHEBI:43474"/>
        <dbReference type="ChEBI" id="CHEBI:456216"/>
        <dbReference type="EC" id="3.6.4.13"/>
    </reaction>
</comment>
<comment type="subunit">
    <text evidence="1 2">Found in a multi-helicase-TICAM1 complex at least composed of DHX36, DDX1, DDX21 and TICAM1; this complex exists in resting cells with or without poly(I:C) RNA ligand stimulation (By similarity). Interacts with DHX36 (By similarity). Interacts (via B30.2/SPRY domain) with DDX21 (via N-terminus); this interaction serves as bridges to TICAM1 (By similarity). Interacts with FAM98A (via N- and C-terminus) (By similarity). Interacts with PHF5A (via C-terminus) (By similarity). Interacts with MBNL1 (By similarity). Interacts with CSTF2 (By similarity). Interacts with HNRNPK (By similarity). Interacts with ATM (By similarity). Interacts with RELA (via C-terminus) (By similarity). Component of the tRNA-splicing ligase complex (By similarity). Interacts with PQBP1 (By similarity). Interacts with ERCC6 (By similarity).</text>
</comment>
<comment type="subcellular location">
    <subcellularLocation>
        <location evidence="2">Nucleus</location>
    </subcellularLocation>
    <subcellularLocation>
        <location evidence="2">Cytoplasm</location>
    </subcellularLocation>
    <subcellularLocation>
        <location evidence="2">Cytoplasmic granule</location>
    </subcellularLocation>
    <subcellularLocation>
        <location evidence="1">Cytoplasm</location>
        <location evidence="1">Cytosol</location>
    </subcellularLocation>
    <subcellularLocation>
        <location evidence="1">Mitochondrion</location>
    </subcellularLocation>
    <text evidence="1 2">Localized with MBNL1, TIAL1 and YBX1 in stress granules upon stress. Localized with CSTF2 in cleavage bodies. Forms large aggregates called DDX1 bodies. Relocalized into multiple foci (IR-induced foci or IRIF) after IR treatment, a process that depends on the presence of chromosomal DNA and/or RNA-DNA duplexes. Relocalized at sites of DNA double-strand breaks (DSBs) in an ATM-dependent manner after IR treatment. Colocalized with RELA in the nucleus upon TNF-alpha induction. Enters into the nucleus in case of active transcription while it accumulates in cytosol when transcription level is low. Colocalizes in the cytosol with DDX21, DHX36 and TICAM1. Colocalizes in the mitochondria with TICAM1 and poly(I:C) RNA ligand. The multi-helicase-TICAM1 complex may translocate to the mitochondria upon poly(I:C) stimulation (By similarity).</text>
</comment>
<comment type="domain">
    <text evidence="2">The helicase domain is involved in the stimulation of RELA transcriptional activity.</text>
</comment>
<comment type="PTM">
    <text evidence="2">Phosphorylated by ATM kinase; phosphorylation is increased in response to ionizing radiation (IR).</text>
</comment>
<comment type="similarity">
    <text evidence="6">Belongs to the DEAD box helicase family. DDX1 subfamily.</text>
</comment>
<feature type="chain" id="PRO_0000054988" description="ATP-dependent RNA helicase DDX1">
    <location>
        <begin position="1"/>
        <end position="740"/>
    </location>
</feature>
<feature type="domain" description="Helicase ATP-binding" evidence="3">
    <location>
        <begin position="2"/>
        <end position="428"/>
    </location>
</feature>
<feature type="domain" description="B30.2/SPRY" evidence="5">
    <location>
        <begin position="70"/>
        <end position="247"/>
    </location>
</feature>
<feature type="domain" description="Helicase C-terminal" evidence="4">
    <location>
        <begin position="493"/>
        <end position="681"/>
    </location>
</feature>
<feature type="region of interest" description="Necessary for interaction with RELA" evidence="2">
    <location>
        <begin position="1"/>
        <end position="525"/>
    </location>
</feature>
<feature type="region of interest" description="Interaction with dsRNA" evidence="1">
    <location>
        <begin position="1"/>
        <end position="448"/>
    </location>
</feature>
<feature type="region of interest" description="Necessary for interaction with HNRNPK" evidence="2">
    <location>
        <begin position="1"/>
        <end position="295"/>
    </location>
</feature>
<feature type="region of interest" description="Necessary for interaction with HNRNPK" evidence="2">
    <location>
        <begin position="525"/>
        <end position="740"/>
    </location>
</feature>
<feature type="short sequence motif" description="DEAD box" evidence="3">
    <location>
        <begin position="370"/>
        <end position="373"/>
    </location>
</feature>
<feature type="binding site" evidence="3">
    <location>
        <begin position="46"/>
        <end position="53"/>
    </location>
    <ligand>
        <name>ATP</name>
        <dbReference type="ChEBI" id="CHEBI:30616"/>
    </ligand>
</feature>
<feature type="modified residue" description="N6-acetyllysine" evidence="2">
    <location>
        <position position="239"/>
    </location>
</feature>
<feature type="modified residue" description="N6-acetyllysine" evidence="2">
    <location>
        <position position="268"/>
    </location>
</feature>
<feature type="modified residue" description="N6-acetyllysine; alternate" evidence="2">
    <location>
        <position position="281"/>
    </location>
</feature>
<feature type="modified residue" description="Phosphoserine" evidence="7">
    <location>
        <position position="481"/>
    </location>
</feature>
<feature type="cross-link" description="Glycyl lysine isopeptide (Lys-Gly) (interchain with G-Cter in SUMO2); alternate" evidence="2">
    <location>
        <position position="281"/>
    </location>
</feature>
<proteinExistence type="evidence at protein level"/>
<organism>
    <name type="scientific">Rattus norvegicus</name>
    <name type="common">Rat</name>
    <dbReference type="NCBI Taxonomy" id="10116"/>
    <lineage>
        <taxon>Eukaryota</taxon>
        <taxon>Metazoa</taxon>
        <taxon>Chordata</taxon>
        <taxon>Craniata</taxon>
        <taxon>Vertebrata</taxon>
        <taxon>Euteleostomi</taxon>
        <taxon>Mammalia</taxon>
        <taxon>Eutheria</taxon>
        <taxon>Euarchontoglires</taxon>
        <taxon>Glires</taxon>
        <taxon>Rodentia</taxon>
        <taxon>Myomorpha</taxon>
        <taxon>Muroidea</taxon>
        <taxon>Muridae</taxon>
        <taxon>Murinae</taxon>
        <taxon>Rattus</taxon>
    </lineage>
</organism>
<name>DDX1_RAT</name>
<reference key="1">
    <citation type="journal article" date="2004" name="Genome Res.">
        <title>The status, quality, and expansion of the NIH full-length cDNA project: the Mammalian Gene Collection (MGC).</title>
        <authorList>
            <consortium name="The MGC Project Team"/>
        </authorList>
    </citation>
    <scope>NUCLEOTIDE SEQUENCE [LARGE SCALE MRNA]</scope>
    <source>
        <tissue>Testis</tissue>
    </source>
</reference>
<reference key="2">
    <citation type="journal article" date="2012" name="Nat. Commun.">
        <title>Quantitative maps of protein phosphorylation sites across 14 different rat organs and tissues.</title>
        <authorList>
            <person name="Lundby A."/>
            <person name="Secher A."/>
            <person name="Lage K."/>
            <person name="Nordsborg N.B."/>
            <person name="Dmytriyev A."/>
            <person name="Lundby C."/>
            <person name="Olsen J.V."/>
        </authorList>
    </citation>
    <scope>PHOSPHORYLATION [LARGE SCALE ANALYSIS] AT SER-481</scope>
    <scope>IDENTIFICATION BY MASS SPECTROMETRY [LARGE SCALE ANALYSIS]</scope>
</reference>
<evidence type="ECO:0000250" key="1">
    <source>
        <dbReference type="UniProtKB" id="Q91VR5"/>
    </source>
</evidence>
<evidence type="ECO:0000250" key="2">
    <source>
        <dbReference type="UniProtKB" id="Q92499"/>
    </source>
</evidence>
<evidence type="ECO:0000255" key="3">
    <source>
        <dbReference type="PROSITE-ProRule" id="PRU00541"/>
    </source>
</evidence>
<evidence type="ECO:0000255" key="4">
    <source>
        <dbReference type="PROSITE-ProRule" id="PRU00542"/>
    </source>
</evidence>
<evidence type="ECO:0000255" key="5">
    <source>
        <dbReference type="PROSITE-ProRule" id="PRU00548"/>
    </source>
</evidence>
<evidence type="ECO:0000305" key="6"/>
<evidence type="ECO:0007744" key="7">
    <source>
    </source>
</evidence>
<protein>
    <recommendedName>
        <fullName>ATP-dependent RNA helicase DDX1</fullName>
        <ecNumber>3.6.4.13</ecNumber>
    </recommendedName>
    <alternativeName>
        <fullName>DEAD box protein 1</fullName>
    </alternativeName>
</protein>
<dbReference type="EC" id="3.6.4.13"/>
<dbReference type="EMBL" id="BC082049">
    <property type="protein sequence ID" value="AAH82049.1"/>
    <property type="molecule type" value="mRNA"/>
</dbReference>
<dbReference type="RefSeq" id="NP_445866.1">
    <property type="nucleotide sequence ID" value="NM_053414.1"/>
</dbReference>
<dbReference type="SMR" id="Q641Y8"/>
<dbReference type="BioGRID" id="249974">
    <property type="interactions" value="3"/>
</dbReference>
<dbReference type="FunCoup" id="Q641Y8">
    <property type="interactions" value="3583"/>
</dbReference>
<dbReference type="IntAct" id="Q641Y8">
    <property type="interactions" value="3"/>
</dbReference>
<dbReference type="STRING" id="10116.ENSRNOP00000009100"/>
<dbReference type="iPTMnet" id="Q641Y8"/>
<dbReference type="PhosphoSitePlus" id="Q641Y8"/>
<dbReference type="jPOST" id="Q641Y8"/>
<dbReference type="PaxDb" id="10116-ENSRNOP00000009100"/>
<dbReference type="Ensembl" id="ENSRNOT00000009100.7">
    <property type="protein sequence ID" value="ENSRNOP00000009100.5"/>
    <property type="gene ID" value="ENSRNOG00000006652.7"/>
</dbReference>
<dbReference type="GeneID" id="84474"/>
<dbReference type="KEGG" id="rno:84474"/>
<dbReference type="AGR" id="RGD:619903"/>
<dbReference type="CTD" id="1653"/>
<dbReference type="RGD" id="619903">
    <property type="gene designation" value="Ddx1"/>
</dbReference>
<dbReference type="eggNOG" id="KOG0349">
    <property type="taxonomic scope" value="Eukaryota"/>
</dbReference>
<dbReference type="GeneTree" id="ENSGT00940000155678"/>
<dbReference type="HOGENOM" id="CLU_016321_0_0_1"/>
<dbReference type="InParanoid" id="Q641Y8"/>
<dbReference type="OMA" id="KRQQVKF"/>
<dbReference type="OrthoDB" id="1735at2759"/>
<dbReference type="PhylomeDB" id="Q641Y8"/>
<dbReference type="TreeFam" id="TF106114"/>
<dbReference type="PRO" id="PR:Q641Y8"/>
<dbReference type="Proteomes" id="UP000002494">
    <property type="component" value="Chromosome 6"/>
</dbReference>
<dbReference type="Bgee" id="ENSRNOG00000006652">
    <property type="expression patterns" value="Expressed in skeletal muscle tissue and 20 other cell types or tissues"/>
</dbReference>
<dbReference type="GO" id="GO:0071920">
    <property type="term" value="C:cleavage body"/>
    <property type="evidence" value="ECO:0000250"/>
    <property type="project" value="UniProtKB"/>
</dbReference>
<dbReference type="GO" id="GO:0005737">
    <property type="term" value="C:cytoplasm"/>
    <property type="evidence" value="ECO:0000250"/>
    <property type="project" value="UniProtKB"/>
</dbReference>
<dbReference type="GO" id="GO:0010494">
    <property type="term" value="C:cytoplasmic stress granule"/>
    <property type="evidence" value="ECO:0000250"/>
    <property type="project" value="UniProtKB"/>
</dbReference>
<dbReference type="GO" id="GO:0005829">
    <property type="term" value="C:cytosol"/>
    <property type="evidence" value="ECO:0000250"/>
    <property type="project" value="UniProtKB"/>
</dbReference>
<dbReference type="GO" id="GO:0005739">
    <property type="term" value="C:mitochondrion"/>
    <property type="evidence" value="ECO:0000250"/>
    <property type="project" value="UniProtKB"/>
</dbReference>
<dbReference type="GO" id="GO:0005634">
    <property type="term" value="C:nucleus"/>
    <property type="evidence" value="ECO:0000250"/>
    <property type="project" value="UniProtKB"/>
</dbReference>
<dbReference type="GO" id="GO:1990904">
    <property type="term" value="C:ribonucleoprotein complex"/>
    <property type="evidence" value="ECO:0000266"/>
    <property type="project" value="RGD"/>
</dbReference>
<dbReference type="GO" id="GO:0072669">
    <property type="term" value="C:tRNA-splicing ligase complex"/>
    <property type="evidence" value="ECO:0000250"/>
    <property type="project" value="UniProtKB"/>
</dbReference>
<dbReference type="GO" id="GO:0005524">
    <property type="term" value="F:ATP binding"/>
    <property type="evidence" value="ECO:0007669"/>
    <property type="project" value="UniProtKB-KW"/>
</dbReference>
<dbReference type="GO" id="GO:0016887">
    <property type="term" value="F:ATP hydrolysis activity"/>
    <property type="evidence" value="ECO:0007669"/>
    <property type="project" value="RHEA"/>
</dbReference>
<dbReference type="GO" id="GO:0003682">
    <property type="term" value="F:chromatin binding"/>
    <property type="evidence" value="ECO:0000250"/>
    <property type="project" value="UniProtKB"/>
</dbReference>
<dbReference type="GO" id="GO:0003677">
    <property type="term" value="F:DNA binding"/>
    <property type="evidence" value="ECO:0007669"/>
    <property type="project" value="UniProtKB-KW"/>
</dbReference>
<dbReference type="GO" id="GO:0033677">
    <property type="term" value="F:DNA/RNA helicase activity"/>
    <property type="evidence" value="ECO:0000250"/>
    <property type="project" value="UniProtKB"/>
</dbReference>
<dbReference type="GO" id="GO:0003725">
    <property type="term" value="F:double-stranded RNA binding"/>
    <property type="evidence" value="ECO:0000266"/>
    <property type="project" value="RGD"/>
</dbReference>
<dbReference type="GO" id="GO:0004527">
    <property type="term" value="F:exonuclease activity"/>
    <property type="evidence" value="ECO:0007669"/>
    <property type="project" value="UniProtKB-KW"/>
</dbReference>
<dbReference type="GO" id="GO:0004518">
    <property type="term" value="F:nuclease activity"/>
    <property type="evidence" value="ECO:0000250"/>
    <property type="project" value="UniProtKB"/>
</dbReference>
<dbReference type="GO" id="GO:0008143">
    <property type="term" value="F:poly(A) binding"/>
    <property type="evidence" value="ECO:0000250"/>
    <property type="project" value="UniProtKB"/>
</dbReference>
<dbReference type="GO" id="GO:0003724">
    <property type="term" value="F:RNA helicase activity"/>
    <property type="evidence" value="ECO:0000250"/>
    <property type="project" value="UniProtKB"/>
</dbReference>
<dbReference type="GO" id="GO:0003712">
    <property type="term" value="F:transcription coregulator activity"/>
    <property type="evidence" value="ECO:0000250"/>
    <property type="project" value="UniProtKB"/>
</dbReference>
<dbReference type="GO" id="GO:0051607">
    <property type="term" value="P:defense response to virus"/>
    <property type="evidence" value="ECO:0007669"/>
    <property type="project" value="UniProtKB-KW"/>
</dbReference>
<dbReference type="GO" id="GO:0006302">
    <property type="term" value="P:double-strand break repair"/>
    <property type="evidence" value="ECO:0000250"/>
    <property type="project" value="UniProtKB"/>
</dbReference>
<dbReference type="GO" id="GO:0045087">
    <property type="term" value="P:innate immune response"/>
    <property type="evidence" value="ECO:0007669"/>
    <property type="project" value="UniProtKB-KW"/>
</dbReference>
<dbReference type="GO" id="GO:0006397">
    <property type="term" value="P:mRNA processing"/>
    <property type="evidence" value="ECO:0007669"/>
    <property type="project" value="UniProtKB-KW"/>
</dbReference>
<dbReference type="GO" id="GO:0043123">
    <property type="term" value="P:positive regulation of canonical NF-kappaB signal transduction"/>
    <property type="evidence" value="ECO:0000250"/>
    <property type="project" value="UniProtKB"/>
</dbReference>
<dbReference type="GO" id="GO:0002735">
    <property type="term" value="P:positive regulation of myeloid dendritic cell cytokine production"/>
    <property type="evidence" value="ECO:0000266"/>
    <property type="project" value="RGD"/>
</dbReference>
<dbReference type="GO" id="GO:1903608">
    <property type="term" value="P:protein localization to cytoplasmic stress granule"/>
    <property type="evidence" value="ECO:0000266"/>
    <property type="project" value="RGD"/>
</dbReference>
<dbReference type="GO" id="GO:0043330">
    <property type="term" value="P:response to exogenous dsRNA"/>
    <property type="evidence" value="ECO:0000266"/>
    <property type="project" value="RGD"/>
</dbReference>
<dbReference type="GO" id="GO:0009615">
    <property type="term" value="P:response to virus"/>
    <property type="evidence" value="ECO:0000266"/>
    <property type="project" value="RGD"/>
</dbReference>
<dbReference type="GO" id="GO:0006388">
    <property type="term" value="P:tRNA splicing, via endonucleolytic cleavage and ligation"/>
    <property type="evidence" value="ECO:0000250"/>
    <property type="project" value="UniProtKB"/>
</dbReference>
<dbReference type="CDD" id="cd17938">
    <property type="entry name" value="DEADc_DDX1"/>
    <property type="match status" value="1"/>
</dbReference>
<dbReference type="CDD" id="cd18787">
    <property type="entry name" value="SF2_C_DEAD"/>
    <property type="match status" value="1"/>
</dbReference>
<dbReference type="CDD" id="cd12873">
    <property type="entry name" value="SPRY_DDX1"/>
    <property type="match status" value="1"/>
</dbReference>
<dbReference type="FunFam" id="2.60.120.920:FF:000013">
    <property type="entry name" value="ATP-dependent RNA helicase DDX1"/>
    <property type="match status" value="1"/>
</dbReference>
<dbReference type="FunFam" id="3.40.50.300:FF:000652">
    <property type="entry name" value="ATP-dependent RNA helicase DDX1"/>
    <property type="match status" value="1"/>
</dbReference>
<dbReference type="FunFam" id="3.40.50.300:FF:000708">
    <property type="entry name" value="ATP-dependent RNA helicase DDX1"/>
    <property type="match status" value="1"/>
</dbReference>
<dbReference type="FunFam" id="3.40.50.300:FF:000716">
    <property type="entry name" value="ATP-dependent RNA helicase DDX1"/>
    <property type="match status" value="1"/>
</dbReference>
<dbReference type="Gene3D" id="2.60.120.920">
    <property type="match status" value="1"/>
</dbReference>
<dbReference type="Gene3D" id="3.40.50.300">
    <property type="entry name" value="P-loop containing nucleotide triphosphate hydrolases"/>
    <property type="match status" value="3"/>
</dbReference>
<dbReference type="InterPro" id="IPR001870">
    <property type="entry name" value="B30.2/SPRY"/>
</dbReference>
<dbReference type="InterPro" id="IPR043136">
    <property type="entry name" value="B30.2/SPRY_sf"/>
</dbReference>
<dbReference type="InterPro" id="IPR013320">
    <property type="entry name" value="ConA-like_dom_sf"/>
</dbReference>
<dbReference type="InterPro" id="IPR011545">
    <property type="entry name" value="DEAD/DEAH_box_helicase_dom"/>
</dbReference>
<dbReference type="InterPro" id="IPR014001">
    <property type="entry name" value="Helicase_ATP-bd"/>
</dbReference>
<dbReference type="InterPro" id="IPR001650">
    <property type="entry name" value="Helicase_C-like"/>
</dbReference>
<dbReference type="InterPro" id="IPR027417">
    <property type="entry name" value="P-loop_NTPase"/>
</dbReference>
<dbReference type="InterPro" id="IPR014014">
    <property type="entry name" value="RNA_helicase_DEAD_Q_motif"/>
</dbReference>
<dbReference type="InterPro" id="IPR003877">
    <property type="entry name" value="SPRY_dom"/>
</dbReference>
<dbReference type="PANTHER" id="PTHR24031">
    <property type="entry name" value="RNA HELICASE"/>
    <property type="match status" value="1"/>
</dbReference>
<dbReference type="Pfam" id="PF00270">
    <property type="entry name" value="DEAD"/>
    <property type="match status" value="2"/>
</dbReference>
<dbReference type="Pfam" id="PF00271">
    <property type="entry name" value="Helicase_C"/>
    <property type="match status" value="1"/>
</dbReference>
<dbReference type="Pfam" id="PF00622">
    <property type="entry name" value="SPRY"/>
    <property type="match status" value="1"/>
</dbReference>
<dbReference type="SMART" id="SM00487">
    <property type="entry name" value="DEXDc"/>
    <property type="match status" value="1"/>
</dbReference>
<dbReference type="SMART" id="SM00490">
    <property type="entry name" value="HELICc"/>
    <property type="match status" value="1"/>
</dbReference>
<dbReference type="SMART" id="SM00449">
    <property type="entry name" value="SPRY"/>
    <property type="match status" value="1"/>
</dbReference>
<dbReference type="SUPFAM" id="SSF49899">
    <property type="entry name" value="Concanavalin A-like lectins/glucanases"/>
    <property type="match status" value="1"/>
</dbReference>
<dbReference type="SUPFAM" id="SSF52540">
    <property type="entry name" value="P-loop containing nucleoside triphosphate hydrolases"/>
    <property type="match status" value="2"/>
</dbReference>
<dbReference type="PROSITE" id="PS50188">
    <property type="entry name" value="B302_SPRY"/>
    <property type="match status" value="1"/>
</dbReference>
<dbReference type="PROSITE" id="PS51192">
    <property type="entry name" value="HELICASE_ATP_BIND_1"/>
    <property type="match status" value="2"/>
</dbReference>
<dbReference type="PROSITE" id="PS51194">
    <property type="entry name" value="HELICASE_CTER"/>
    <property type="match status" value="1"/>
</dbReference>
<dbReference type="PROSITE" id="PS51195">
    <property type="entry name" value="Q_MOTIF"/>
    <property type="match status" value="1"/>
</dbReference>